<accession>Q01978</accession>
<accession>Q5D0A6</accession>
<sequence length="658" mass="70091">MNQQQRMTAVGTDKELSDLLDFSMMFPLPVANGKTRPTTLASTQFGGGSGLEERTGSAPWGTEDHNGSTFDQGRGYGDGTHYGEHRELPSHEGNLSAPFLASGLVGKNDRPPYSTFGRDSGMTMNQTGFLSGDLAMNSPSALSPNAGKAGSQYYTYPNNSRRRPGDSNLDAQPKKVRKVPPGLPSSVYPANSGDEYCGDRGSYASTKTPNSVYPGAFYMADGLHSSDIWASSGGIGQGGYSSVLNSSQSSVSQTTGFSSLHPHERMGFPMHSGEVNPSVTSSFSSTPAQYGVSSHTPPISTGDTIIGNRGTATGSSGDALGKALASIYSPDHSSTNFSSTPSTPVGSPQGITGSGQWPRANGPGALSPSYDGTLHTLQNKMEDRLDEAIHVLRSHAVGQTGALPGGHDDIHSLLSATASVLGSGFPAAVLSLANRHSMLNSHTEEALPSASNMLHSQVTVPAQPGSLPDLTRPQDSYSGLPGLGRAIPPGRVPDIKRESKEDEENRSVADLSDDEKKESKPQRSRTRCSINSQDEDEDEDDDNLPPEQKAEREKERRVANNARERLRVKDINEAFKELGRMCQLHLNSEKPQTKLLILHQAVSVILSLEQQVRERNLNPKAACLKRREEEKVSGVDPQMGLSGGHPGVGDSHNPVGHM</sequence>
<name>TFE2_XENLA</name>
<proteinExistence type="evidence at protein level"/>
<feature type="chain" id="PRO_0000127470" description="Transcription factor E2-alpha">
    <location>
        <begin position="1"/>
        <end position="658"/>
    </location>
</feature>
<feature type="domain" description="bHLH" evidence="3">
    <location>
        <begin position="555"/>
        <end position="608"/>
    </location>
</feature>
<feature type="region of interest" description="Disordered" evidence="4">
    <location>
        <begin position="42"/>
        <end position="82"/>
    </location>
</feature>
<feature type="region of interest" description="Disordered" evidence="4">
    <location>
        <begin position="140"/>
        <end position="191"/>
    </location>
</feature>
<feature type="region of interest" description="Disordered" evidence="4">
    <location>
        <begin position="276"/>
        <end position="313"/>
    </location>
</feature>
<feature type="region of interest" description="Disordered" evidence="4">
    <location>
        <begin position="331"/>
        <end position="372"/>
    </location>
</feature>
<feature type="region of interest" description="Disordered" evidence="4">
    <location>
        <begin position="460"/>
        <end position="558"/>
    </location>
</feature>
<feature type="region of interest" description="Disordered" evidence="4">
    <location>
        <begin position="628"/>
        <end position="658"/>
    </location>
</feature>
<feature type="short sequence motif" description="Nuclear localization signal" evidence="2">
    <location>
        <begin position="173"/>
        <end position="179"/>
    </location>
</feature>
<feature type="compositionally biased region" description="Polar residues" evidence="4">
    <location>
        <begin position="276"/>
        <end position="303"/>
    </location>
</feature>
<feature type="compositionally biased region" description="Low complexity" evidence="4">
    <location>
        <begin position="333"/>
        <end position="344"/>
    </location>
</feature>
<feature type="compositionally biased region" description="Polar residues" evidence="4">
    <location>
        <begin position="345"/>
        <end position="355"/>
    </location>
</feature>
<feature type="compositionally biased region" description="Basic and acidic residues" evidence="4">
    <location>
        <begin position="493"/>
        <end position="507"/>
    </location>
</feature>
<feature type="compositionally biased region" description="Acidic residues" evidence="4">
    <location>
        <begin position="533"/>
        <end position="544"/>
    </location>
</feature>
<feature type="compositionally biased region" description="Basic and acidic residues" evidence="4">
    <location>
        <begin position="548"/>
        <end position="558"/>
    </location>
</feature>
<feature type="splice variant" id="VSP_002158" description="In isoform E47." evidence="7">
    <original>DEDEDEDDDNLPPEQKAEREKERRVANNARERLRVKDINEAFKELGRMCQLHLNSEKPQTKLLILHQAVSVIL</original>
    <variation>SKEDCVEEKDTKDRERRMSNNARERVRVRDINEAFKELGRMVQMHMKADKAQTKLIILQQAVAVIM</variation>
    <location>
        <begin position="534"/>
        <end position="606"/>
    </location>
</feature>
<comment type="function">
    <text evidence="1">Transcriptional regulator involved in the initiation of neuronal differentiation and mesenchymal to epithelial transition. Heterodimers between tcf3 and tissue-specific basic helix-loop-helix (bHLH) proteins play major roles in determining tissue-specific cell fate during embryogenesis, like muscle or early B-cell differentiation. Together with tcf15, required for the mesenchymal to epithelial transition. Dimers bind DNA on E-box motifs: 5'-CANNTG-3'.</text>
</comment>
<comment type="subunit">
    <text evidence="1 6">Homodimer. Heterodimer; efficient DNA binding requires dimerization with another bHLH protein (By similarity). Interacts with tgfb1i1 (PubMed:16291758).</text>
</comment>
<comment type="interaction">
    <interactant intactId="EBI-9106902">
        <id>Q01978</id>
    </interactant>
    <interactant intactId="EBI-9106822">
        <id>Q61473</id>
        <label>Sox17</label>
    </interactant>
    <organismsDiffer>true</organismsDiffer>
    <experiments>3</experiments>
</comment>
<comment type="subcellular location">
    <subcellularLocation>
        <location evidence="1">Nucleus</location>
    </subcellularLocation>
</comment>
<comment type="alternative products">
    <event type="alternative splicing"/>
    <isoform>
        <id>Q01978-1</id>
        <name>E12</name>
        <sequence type="displayed"/>
    </isoform>
    <isoform>
        <id>Q01978-2</id>
        <name>E47</name>
        <sequence type="described" ref="VSP_002158"/>
    </isoform>
</comment>
<comment type="developmental stage">
    <text evidence="5">Isoform E12 and isoform E47 are present at all the stages of development and in all regions of the embryo.</text>
</comment>
<dbReference type="EMBL" id="X66959">
    <property type="protein sequence ID" value="CAA47381.1"/>
    <property type="molecule type" value="mRNA"/>
</dbReference>
<dbReference type="EMBL" id="BC046840">
    <property type="protein sequence ID" value="AAH46840.1"/>
    <property type="molecule type" value="mRNA"/>
</dbReference>
<dbReference type="PIR" id="S23391">
    <property type="entry name" value="S23391"/>
</dbReference>
<dbReference type="RefSeq" id="NP_001079668.1">
    <molecule id="Q01978-1"/>
    <property type="nucleotide sequence ID" value="NM_001086199.1"/>
</dbReference>
<dbReference type="RefSeq" id="XP_018116184.1">
    <molecule id="Q01978-1"/>
    <property type="nucleotide sequence ID" value="XM_018260695.1"/>
</dbReference>
<dbReference type="SMR" id="Q01978"/>
<dbReference type="BioGRID" id="97598">
    <property type="interactions" value="5"/>
</dbReference>
<dbReference type="IntAct" id="Q01978">
    <property type="interactions" value="1"/>
</dbReference>
<dbReference type="DNASU" id="379355"/>
<dbReference type="GeneID" id="379355"/>
<dbReference type="KEGG" id="xla:379355"/>
<dbReference type="AGR" id="Xenbase:XB-GENE-865159"/>
<dbReference type="CTD" id="379355"/>
<dbReference type="Xenbase" id="XB-GENE-865159">
    <property type="gene designation" value="tcf3.L"/>
</dbReference>
<dbReference type="OMA" id="FPQPHCL"/>
<dbReference type="OrthoDB" id="10034090at2759"/>
<dbReference type="Proteomes" id="UP000186698">
    <property type="component" value="Chromosome 1L"/>
</dbReference>
<dbReference type="Bgee" id="379355">
    <property type="expression patterns" value="Expressed in gastrula and 19 other cell types or tissues"/>
</dbReference>
<dbReference type="GO" id="GO:0000785">
    <property type="term" value="C:chromatin"/>
    <property type="evidence" value="ECO:0000318"/>
    <property type="project" value="GO_Central"/>
</dbReference>
<dbReference type="GO" id="GO:0005634">
    <property type="term" value="C:nucleus"/>
    <property type="evidence" value="ECO:0007669"/>
    <property type="project" value="UniProtKB-SubCell"/>
</dbReference>
<dbReference type="GO" id="GO:0005667">
    <property type="term" value="C:transcription regulator complex"/>
    <property type="evidence" value="ECO:0000318"/>
    <property type="project" value="GO_Central"/>
</dbReference>
<dbReference type="GO" id="GO:0043425">
    <property type="term" value="F:bHLH transcription factor binding"/>
    <property type="evidence" value="ECO:0000353"/>
    <property type="project" value="UniProtKB"/>
</dbReference>
<dbReference type="GO" id="GO:0003700">
    <property type="term" value="F:DNA-binding transcription factor activity"/>
    <property type="evidence" value="ECO:0000314"/>
    <property type="project" value="BHF-UCL"/>
</dbReference>
<dbReference type="GO" id="GO:0000981">
    <property type="term" value="F:DNA-binding transcription factor activity, RNA polymerase II-specific"/>
    <property type="evidence" value="ECO:0000250"/>
    <property type="project" value="UniProtKB"/>
</dbReference>
<dbReference type="GO" id="GO:0070888">
    <property type="term" value="F:E-box binding"/>
    <property type="evidence" value="ECO:0000250"/>
    <property type="project" value="UniProtKB"/>
</dbReference>
<dbReference type="GO" id="GO:0046982">
    <property type="term" value="F:protein heterodimerization activity"/>
    <property type="evidence" value="ECO:0000250"/>
    <property type="project" value="UniProtKB"/>
</dbReference>
<dbReference type="GO" id="GO:0000978">
    <property type="term" value="F:RNA polymerase II cis-regulatory region sequence-specific DNA binding"/>
    <property type="evidence" value="ECO:0000318"/>
    <property type="project" value="GO_Central"/>
</dbReference>
<dbReference type="GO" id="GO:0061629">
    <property type="term" value="F:RNA polymerase II-specific DNA-binding transcription factor binding"/>
    <property type="evidence" value="ECO:0000353"/>
    <property type="project" value="BHF-UCL"/>
</dbReference>
<dbReference type="GO" id="GO:0030154">
    <property type="term" value="P:cell differentiation"/>
    <property type="evidence" value="ECO:0007669"/>
    <property type="project" value="UniProtKB-KW"/>
</dbReference>
<dbReference type="GO" id="GO:0060429">
    <property type="term" value="P:epithelium development"/>
    <property type="evidence" value="ECO:0000316"/>
    <property type="project" value="Xenbase"/>
</dbReference>
<dbReference type="GO" id="GO:0007399">
    <property type="term" value="P:nervous system development"/>
    <property type="evidence" value="ECO:0007669"/>
    <property type="project" value="UniProtKB-KW"/>
</dbReference>
<dbReference type="GO" id="GO:0045666">
    <property type="term" value="P:positive regulation of neuron differentiation"/>
    <property type="evidence" value="ECO:0000250"/>
    <property type="project" value="UniProtKB"/>
</dbReference>
<dbReference type="GO" id="GO:0045944">
    <property type="term" value="P:positive regulation of transcription by RNA polymerase II"/>
    <property type="evidence" value="ECO:0000250"/>
    <property type="project" value="UniProtKB"/>
</dbReference>
<dbReference type="GO" id="GO:0006357">
    <property type="term" value="P:regulation of transcription by RNA polymerase II"/>
    <property type="evidence" value="ECO:0000318"/>
    <property type="project" value="GO_Central"/>
</dbReference>
<dbReference type="CDD" id="cd18945">
    <property type="entry name" value="bHLH_E-protein_TCF4_E2-2"/>
    <property type="match status" value="1"/>
</dbReference>
<dbReference type="FunFam" id="4.10.280.10:FF:000001">
    <property type="entry name" value="Putative transcription factor 12"/>
    <property type="match status" value="1"/>
</dbReference>
<dbReference type="Gene3D" id="4.10.280.10">
    <property type="entry name" value="Helix-loop-helix DNA-binding domain"/>
    <property type="match status" value="1"/>
</dbReference>
<dbReference type="InterPro" id="IPR011598">
    <property type="entry name" value="bHLH_dom"/>
</dbReference>
<dbReference type="InterPro" id="IPR036638">
    <property type="entry name" value="HLH_DNA-bd_sf"/>
</dbReference>
<dbReference type="InterPro" id="IPR051098">
    <property type="entry name" value="NeuroDiff_E-box_TFs"/>
</dbReference>
<dbReference type="PANTHER" id="PTHR11793">
    <property type="entry name" value="BASIC HELIX-LOOP-HELIX TRANSCRIPTION FACTOR"/>
    <property type="match status" value="1"/>
</dbReference>
<dbReference type="PANTHER" id="PTHR11793:SF7">
    <property type="entry name" value="TRANSCRIPTION FACTOR E2-ALPHA"/>
    <property type="match status" value="1"/>
</dbReference>
<dbReference type="Pfam" id="PF00010">
    <property type="entry name" value="HLH"/>
    <property type="match status" value="1"/>
</dbReference>
<dbReference type="SMART" id="SM00353">
    <property type="entry name" value="HLH"/>
    <property type="match status" value="1"/>
</dbReference>
<dbReference type="SUPFAM" id="SSF47459">
    <property type="entry name" value="HLH, helix-loop-helix DNA-binding domain"/>
    <property type="match status" value="1"/>
</dbReference>
<dbReference type="PROSITE" id="PS50888">
    <property type="entry name" value="BHLH"/>
    <property type="match status" value="1"/>
</dbReference>
<protein>
    <recommendedName>
        <fullName>Transcription factor E2-alpha</fullName>
    </recommendedName>
    <alternativeName>
        <fullName>Transcription factor 3</fullName>
        <shortName>TCF-3</shortName>
    </alternativeName>
    <alternativeName>
        <fullName>Transcription factor XE12/XE47</fullName>
    </alternativeName>
</protein>
<gene>
    <name type="primary">tcf3</name>
    <name type="synonym">e2a</name>
</gene>
<evidence type="ECO:0000250" key="1">
    <source>
        <dbReference type="UniProtKB" id="P15806"/>
    </source>
</evidence>
<evidence type="ECO:0000255" key="2"/>
<evidence type="ECO:0000255" key="3">
    <source>
        <dbReference type="PROSITE-ProRule" id="PRU00981"/>
    </source>
</evidence>
<evidence type="ECO:0000256" key="4">
    <source>
        <dbReference type="SAM" id="MobiDB-lite"/>
    </source>
</evidence>
<evidence type="ECO:0000269" key="5">
    <source>
    </source>
</evidence>
<evidence type="ECO:0000269" key="6">
    <source>
    </source>
</evidence>
<evidence type="ECO:0000305" key="7"/>
<organism>
    <name type="scientific">Xenopus laevis</name>
    <name type="common">African clawed frog</name>
    <dbReference type="NCBI Taxonomy" id="8355"/>
    <lineage>
        <taxon>Eukaryota</taxon>
        <taxon>Metazoa</taxon>
        <taxon>Chordata</taxon>
        <taxon>Craniata</taxon>
        <taxon>Vertebrata</taxon>
        <taxon>Euteleostomi</taxon>
        <taxon>Amphibia</taxon>
        <taxon>Batrachia</taxon>
        <taxon>Anura</taxon>
        <taxon>Pipoidea</taxon>
        <taxon>Pipidae</taxon>
        <taxon>Xenopodinae</taxon>
        <taxon>Xenopus</taxon>
        <taxon>Xenopus</taxon>
    </lineage>
</organism>
<keyword id="KW-0025">Alternative splicing</keyword>
<keyword id="KW-0221">Differentiation</keyword>
<keyword id="KW-0238">DNA-binding</keyword>
<keyword id="KW-0524">Neurogenesis</keyword>
<keyword id="KW-0539">Nucleus</keyword>
<keyword id="KW-1185">Reference proteome</keyword>
<keyword id="KW-0804">Transcription</keyword>
<keyword id="KW-0805">Transcription regulation</keyword>
<reference key="1">
    <citation type="journal article" date="1992" name="EMBO J.">
        <title>The DNA-binding protein E12 co-operates with XMyoD in the activation of muscle-specific gene expression in Xenopus embryos.</title>
        <authorList>
            <person name="Rashbass J."/>
            <person name="Taylor M.V."/>
            <person name="Gurdon J.B."/>
        </authorList>
    </citation>
    <scope>NUCLEOTIDE SEQUENCE [MRNA]</scope>
    <scope>ALTERNATIVE SPLICING</scope>
    <scope>DEVELOPMENTAL STAGE</scope>
    <source>
        <tissue>Neurula</tissue>
    </source>
</reference>
<reference key="2">
    <citation type="submission" date="2003-02" db="EMBL/GenBank/DDBJ databases">
        <authorList>
            <consortium name="NIH - Xenopus Gene Collection (XGC) project"/>
        </authorList>
    </citation>
    <scope>NUCLEOTIDE SEQUENCE [LARGE SCALE MRNA]</scope>
    <source>
        <tissue>Embryo</tissue>
    </source>
</reference>
<reference key="3">
    <citation type="journal article" date="2006" name="J. Biol. Chem.">
        <title>HIC-5 is a novel repressor of lymphoid enhancer factor/T-cell factor-driven transcription.</title>
        <authorList>
            <person name="Ghogomu S.M."/>
            <person name="van Venrooy S."/>
            <person name="Ritthaler M."/>
            <person name="Wedlich D."/>
            <person name="Gradl D."/>
        </authorList>
    </citation>
    <scope>INTERACTION WITH TGFB1I1</scope>
</reference>